<name>GATA_BURCH</name>
<organism>
    <name type="scientific">Burkholderia cenocepacia (strain HI2424)</name>
    <dbReference type="NCBI Taxonomy" id="331272"/>
    <lineage>
        <taxon>Bacteria</taxon>
        <taxon>Pseudomonadati</taxon>
        <taxon>Pseudomonadota</taxon>
        <taxon>Betaproteobacteria</taxon>
        <taxon>Burkholderiales</taxon>
        <taxon>Burkholderiaceae</taxon>
        <taxon>Burkholderia</taxon>
        <taxon>Burkholderia cepacia complex</taxon>
    </lineage>
</organism>
<evidence type="ECO:0000255" key="1">
    <source>
        <dbReference type="HAMAP-Rule" id="MF_00120"/>
    </source>
</evidence>
<accession>A0KBH9</accession>
<gene>
    <name evidence="1" type="primary">gatA</name>
    <name type="ordered locus">Bcen2424_3108</name>
</gene>
<sequence length="496" mass="52377">MHAKSLTELRAALAAKECSAVELAQHYLKRIDAARDLNAFVHVDADLTLAQAKAADAELARGAGGALTGLPIAHKDVFVTRGWRSTAGSKMLANYESPFDATVVARLQAAGMVTLGKTNMDEFAMGSSNENSAFGAVKNPWDTNAVPGGSSGGSSAAVAARLAPAATGTDTGGSIRQPASFAGVTGIKPTYGRVSRYGMIAFASSLDQGGPMAQSASDCALLLNAMAGFDERDSTSLERDDEDFTRHLGQPWAAGNDAGKPLAGLRIGLPNEYFGAGLADDVRATIDAALKQYEALGATLVPVSLPKTELSIPVYYVIAPAEASSNLSRFDGVRFGHRAAQYGDLLDMYKKSRAEGFGPEVKRRILVGTYVLSHGYYDAYYLQAQKIRRIIANDFQEAFKSCDVIMGPASPTVAWDLGAKGDDPVQMYLADIYTLSVSLAGLPGMSVPCGFGAGANAKRPVGLQIIGNYFNEARMLQVADAFQRATDWHKQVPAGV</sequence>
<protein>
    <recommendedName>
        <fullName evidence="1">Glutamyl-tRNA(Gln) amidotransferase subunit A</fullName>
        <shortName evidence="1">Glu-ADT subunit A</shortName>
        <ecNumber evidence="1">6.3.5.7</ecNumber>
    </recommendedName>
</protein>
<proteinExistence type="inferred from homology"/>
<feature type="chain" id="PRO_1000015806" description="Glutamyl-tRNA(Gln) amidotransferase subunit A">
    <location>
        <begin position="1"/>
        <end position="496"/>
    </location>
</feature>
<feature type="active site" description="Charge relay system" evidence="1">
    <location>
        <position position="75"/>
    </location>
</feature>
<feature type="active site" description="Charge relay system" evidence="1">
    <location>
        <position position="150"/>
    </location>
</feature>
<feature type="active site" description="Acyl-ester intermediate" evidence="1">
    <location>
        <position position="174"/>
    </location>
</feature>
<comment type="function">
    <text evidence="1">Allows the formation of correctly charged Gln-tRNA(Gln) through the transamidation of misacylated Glu-tRNA(Gln) in organisms which lack glutaminyl-tRNA synthetase. The reaction takes place in the presence of glutamine and ATP through an activated gamma-phospho-Glu-tRNA(Gln).</text>
</comment>
<comment type="catalytic activity">
    <reaction evidence="1">
        <text>L-glutamyl-tRNA(Gln) + L-glutamine + ATP + H2O = L-glutaminyl-tRNA(Gln) + L-glutamate + ADP + phosphate + H(+)</text>
        <dbReference type="Rhea" id="RHEA:17521"/>
        <dbReference type="Rhea" id="RHEA-COMP:9681"/>
        <dbReference type="Rhea" id="RHEA-COMP:9684"/>
        <dbReference type="ChEBI" id="CHEBI:15377"/>
        <dbReference type="ChEBI" id="CHEBI:15378"/>
        <dbReference type="ChEBI" id="CHEBI:29985"/>
        <dbReference type="ChEBI" id="CHEBI:30616"/>
        <dbReference type="ChEBI" id="CHEBI:43474"/>
        <dbReference type="ChEBI" id="CHEBI:58359"/>
        <dbReference type="ChEBI" id="CHEBI:78520"/>
        <dbReference type="ChEBI" id="CHEBI:78521"/>
        <dbReference type="ChEBI" id="CHEBI:456216"/>
        <dbReference type="EC" id="6.3.5.7"/>
    </reaction>
</comment>
<comment type="subunit">
    <text evidence="1">Heterotrimer of A, B and C subunits.</text>
</comment>
<comment type="similarity">
    <text evidence="1">Belongs to the amidase family. GatA subfamily.</text>
</comment>
<keyword id="KW-0067">ATP-binding</keyword>
<keyword id="KW-0436">Ligase</keyword>
<keyword id="KW-0547">Nucleotide-binding</keyword>
<keyword id="KW-0648">Protein biosynthesis</keyword>
<reference key="1">
    <citation type="submission" date="2006-08" db="EMBL/GenBank/DDBJ databases">
        <title>Complete sequence of chromosome 1 of Burkholderia cenocepacia HI2424.</title>
        <authorList>
            <person name="Copeland A."/>
            <person name="Lucas S."/>
            <person name="Lapidus A."/>
            <person name="Barry K."/>
            <person name="Detter J.C."/>
            <person name="Glavina del Rio T."/>
            <person name="Hammon N."/>
            <person name="Israni S."/>
            <person name="Pitluck S."/>
            <person name="Chain P."/>
            <person name="Malfatti S."/>
            <person name="Shin M."/>
            <person name="Vergez L."/>
            <person name="Schmutz J."/>
            <person name="Larimer F."/>
            <person name="Land M."/>
            <person name="Hauser L."/>
            <person name="Kyrpides N."/>
            <person name="Kim E."/>
            <person name="LiPuma J.J."/>
            <person name="Gonzalez C.F."/>
            <person name="Konstantinidis K."/>
            <person name="Tiedje J.M."/>
            <person name="Richardson P."/>
        </authorList>
    </citation>
    <scope>NUCLEOTIDE SEQUENCE [LARGE SCALE GENOMIC DNA]</scope>
    <source>
        <strain>HI2424</strain>
    </source>
</reference>
<dbReference type="EC" id="6.3.5.7" evidence="1"/>
<dbReference type="EMBL" id="CP000458">
    <property type="protein sequence ID" value="ABK09856.1"/>
    <property type="molecule type" value="Genomic_DNA"/>
</dbReference>
<dbReference type="RefSeq" id="WP_011546474.1">
    <property type="nucleotide sequence ID" value="NC_008542.1"/>
</dbReference>
<dbReference type="SMR" id="A0KBH9"/>
<dbReference type="GeneID" id="83049905"/>
<dbReference type="KEGG" id="bch:Bcen2424_3108"/>
<dbReference type="HOGENOM" id="CLU_009600_0_3_4"/>
<dbReference type="GO" id="GO:0030956">
    <property type="term" value="C:glutamyl-tRNA(Gln) amidotransferase complex"/>
    <property type="evidence" value="ECO:0007669"/>
    <property type="project" value="InterPro"/>
</dbReference>
<dbReference type="GO" id="GO:0005524">
    <property type="term" value="F:ATP binding"/>
    <property type="evidence" value="ECO:0007669"/>
    <property type="project" value="UniProtKB-KW"/>
</dbReference>
<dbReference type="GO" id="GO:0050567">
    <property type="term" value="F:glutaminyl-tRNA synthase (glutamine-hydrolyzing) activity"/>
    <property type="evidence" value="ECO:0007669"/>
    <property type="project" value="UniProtKB-UniRule"/>
</dbReference>
<dbReference type="GO" id="GO:0006412">
    <property type="term" value="P:translation"/>
    <property type="evidence" value="ECO:0007669"/>
    <property type="project" value="UniProtKB-UniRule"/>
</dbReference>
<dbReference type="Gene3D" id="3.90.1300.10">
    <property type="entry name" value="Amidase signature (AS) domain"/>
    <property type="match status" value="1"/>
</dbReference>
<dbReference type="HAMAP" id="MF_00120">
    <property type="entry name" value="GatA"/>
    <property type="match status" value="1"/>
</dbReference>
<dbReference type="InterPro" id="IPR000120">
    <property type="entry name" value="Amidase"/>
</dbReference>
<dbReference type="InterPro" id="IPR020556">
    <property type="entry name" value="Amidase_CS"/>
</dbReference>
<dbReference type="InterPro" id="IPR023631">
    <property type="entry name" value="Amidase_dom"/>
</dbReference>
<dbReference type="InterPro" id="IPR036928">
    <property type="entry name" value="AS_sf"/>
</dbReference>
<dbReference type="InterPro" id="IPR004412">
    <property type="entry name" value="GatA"/>
</dbReference>
<dbReference type="NCBIfam" id="TIGR00132">
    <property type="entry name" value="gatA"/>
    <property type="match status" value="1"/>
</dbReference>
<dbReference type="PANTHER" id="PTHR11895:SF151">
    <property type="entry name" value="GLUTAMYL-TRNA(GLN) AMIDOTRANSFERASE SUBUNIT A"/>
    <property type="match status" value="1"/>
</dbReference>
<dbReference type="PANTHER" id="PTHR11895">
    <property type="entry name" value="TRANSAMIDASE"/>
    <property type="match status" value="1"/>
</dbReference>
<dbReference type="Pfam" id="PF01425">
    <property type="entry name" value="Amidase"/>
    <property type="match status" value="1"/>
</dbReference>
<dbReference type="SUPFAM" id="SSF75304">
    <property type="entry name" value="Amidase signature (AS) enzymes"/>
    <property type="match status" value="1"/>
</dbReference>
<dbReference type="PROSITE" id="PS00571">
    <property type="entry name" value="AMIDASES"/>
    <property type="match status" value="1"/>
</dbReference>